<evidence type="ECO:0000255" key="1"/>
<evidence type="ECO:0000269" key="2">
    <source>
    </source>
</evidence>
<evidence type="ECO:0000303" key="3">
    <source>
    </source>
</evidence>
<evidence type="ECO:0000305" key="4"/>
<reference key="1">
    <citation type="journal article" date="2000" name="FEBS Lett.">
        <title>Characterization of Arabidopsis AtAMT2, a novel ammonium transporter in plants.</title>
        <authorList>
            <person name="Sohlenkamp C."/>
            <person name="Shelden M.C."/>
            <person name="Howitt S.M."/>
            <person name="Udvardi M.K."/>
        </authorList>
    </citation>
    <scope>NUCLEOTIDE SEQUENCE [MRNA] (ISOFORM 1)</scope>
    <scope>CHARACTERIZATION</scope>
    <source>
        <strain>cv. C24</strain>
        <tissue>Root</tissue>
    </source>
</reference>
<reference key="2">
    <citation type="journal article" date="1999" name="Nature">
        <title>Sequence and analysis of chromosome 2 of the plant Arabidopsis thaliana.</title>
        <authorList>
            <person name="Lin X."/>
            <person name="Kaul S."/>
            <person name="Rounsley S.D."/>
            <person name="Shea T.P."/>
            <person name="Benito M.-I."/>
            <person name="Town C.D."/>
            <person name="Fujii C.Y."/>
            <person name="Mason T.M."/>
            <person name="Bowman C.L."/>
            <person name="Barnstead M.E."/>
            <person name="Feldblyum T.V."/>
            <person name="Buell C.R."/>
            <person name="Ketchum K.A."/>
            <person name="Lee J.J."/>
            <person name="Ronning C.M."/>
            <person name="Koo H.L."/>
            <person name="Moffat K.S."/>
            <person name="Cronin L.A."/>
            <person name="Shen M."/>
            <person name="Pai G."/>
            <person name="Van Aken S."/>
            <person name="Umayam L."/>
            <person name="Tallon L.J."/>
            <person name="Gill J.E."/>
            <person name="Adams M.D."/>
            <person name="Carrera A.J."/>
            <person name="Creasy T.H."/>
            <person name="Goodman H.M."/>
            <person name="Somerville C.R."/>
            <person name="Copenhaver G.P."/>
            <person name="Preuss D."/>
            <person name="Nierman W.C."/>
            <person name="White O."/>
            <person name="Eisen J.A."/>
            <person name="Salzberg S.L."/>
            <person name="Fraser C.M."/>
            <person name="Venter J.C."/>
        </authorList>
    </citation>
    <scope>NUCLEOTIDE SEQUENCE [LARGE SCALE GENOMIC DNA]</scope>
    <source>
        <strain>cv. Columbia</strain>
    </source>
</reference>
<reference key="3">
    <citation type="journal article" date="2017" name="Plant J.">
        <title>Araport11: a complete reannotation of the Arabidopsis thaliana reference genome.</title>
        <authorList>
            <person name="Cheng C.Y."/>
            <person name="Krishnakumar V."/>
            <person name="Chan A.P."/>
            <person name="Thibaud-Nissen F."/>
            <person name="Schobel S."/>
            <person name="Town C.D."/>
        </authorList>
    </citation>
    <scope>GENOME REANNOTATION</scope>
    <source>
        <strain>cv. Columbia</strain>
    </source>
</reference>
<reference key="4">
    <citation type="submission" date="2006-05" db="EMBL/GenBank/DDBJ databases">
        <title>Arabidopsis ORF clones.</title>
        <authorList>
            <person name="Shinn P."/>
            <person name="Chen H."/>
            <person name="Kim C.J."/>
            <person name="Quinitio C."/>
            <person name="Ecker J.R."/>
        </authorList>
    </citation>
    <scope>NUCLEOTIDE SEQUENCE [LARGE SCALE MRNA] (ISOFORM 1)</scope>
    <source>
        <strain>cv. Columbia</strain>
    </source>
</reference>
<reference key="5">
    <citation type="submission" date="2006-07" db="EMBL/GenBank/DDBJ databases">
        <title>Large-scale analysis of RIKEN Arabidopsis full-length (RAFL) cDNAs.</title>
        <authorList>
            <person name="Totoki Y."/>
            <person name="Seki M."/>
            <person name="Ishida J."/>
            <person name="Nakajima M."/>
            <person name="Enju A."/>
            <person name="Kamiya A."/>
            <person name="Narusaka M."/>
            <person name="Shin-i T."/>
            <person name="Nakagawa M."/>
            <person name="Sakamoto N."/>
            <person name="Oishi K."/>
            <person name="Kohara Y."/>
            <person name="Kobayashi M."/>
            <person name="Toyoda A."/>
            <person name="Sakaki Y."/>
            <person name="Sakurai T."/>
            <person name="Iida K."/>
            <person name="Akiyama K."/>
            <person name="Satou M."/>
            <person name="Toyoda T."/>
            <person name="Konagaya A."/>
            <person name="Carninci P."/>
            <person name="Kawai J."/>
            <person name="Hayashizaki Y."/>
            <person name="Shinozaki K."/>
        </authorList>
    </citation>
    <scope>NUCLEOTIDE SEQUENCE [LARGE SCALE MRNA] (ISOFORM 1)</scope>
    <source>
        <strain>cv. Columbia</strain>
    </source>
</reference>
<reference key="6">
    <citation type="journal article" date="2004" name="Genome Res.">
        <title>Whole genome sequence comparisons and 'full-length' cDNA sequences: a combined approach to evaluate and improve Arabidopsis genome annotation.</title>
        <authorList>
            <person name="Castelli V."/>
            <person name="Aury J.-M."/>
            <person name="Jaillon O."/>
            <person name="Wincker P."/>
            <person name="Clepet C."/>
            <person name="Menard M."/>
            <person name="Cruaud C."/>
            <person name="Quetier F."/>
            <person name="Scarpelli C."/>
            <person name="Schaechter V."/>
            <person name="Temple G."/>
            <person name="Caboche M."/>
            <person name="Weissenbach J."/>
            <person name="Salanoubat M."/>
        </authorList>
    </citation>
    <scope>NUCLEOTIDE SEQUENCE [LARGE SCALE MRNA] (ISOFORM 2)</scope>
    <source>
        <strain>cv. Columbia</strain>
    </source>
</reference>
<reference key="7">
    <citation type="journal article" date="2002" name="Plant Physiol.">
        <title>Characterization of Arabidopsis AtAMT2, a high-affinity ammonium transporter of the plasma membrane.</title>
        <authorList>
            <person name="Sohlenkamp C."/>
            <person name="Wood C.C."/>
            <person name="Roeb G.W."/>
            <person name="Udvardi M.K."/>
        </authorList>
    </citation>
    <scope>FUNCTION</scope>
    <scope>BIOPHYSICOCHEMICAL PROPERTIES</scope>
    <scope>SUBCELLULAR LOCATION</scope>
    <scope>TISSUE SPECIFICITY</scope>
    <scope>INDUCTION</scope>
</reference>
<organism>
    <name type="scientific">Arabidopsis thaliana</name>
    <name type="common">Mouse-ear cress</name>
    <dbReference type="NCBI Taxonomy" id="3702"/>
    <lineage>
        <taxon>Eukaryota</taxon>
        <taxon>Viridiplantae</taxon>
        <taxon>Streptophyta</taxon>
        <taxon>Embryophyta</taxon>
        <taxon>Tracheophyta</taxon>
        <taxon>Spermatophyta</taxon>
        <taxon>Magnoliopsida</taxon>
        <taxon>eudicotyledons</taxon>
        <taxon>Gunneridae</taxon>
        <taxon>Pentapetalae</taxon>
        <taxon>rosids</taxon>
        <taxon>malvids</taxon>
        <taxon>Brassicales</taxon>
        <taxon>Brassicaceae</taxon>
        <taxon>Camelineae</taxon>
        <taxon>Arabidopsis</taxon>
    </lineage>
</organism>
<accession>Q9M6N7</accession>
<accession>Q1JPN2</accession>
<dbReference type="EMBL" id="AF182039">
    <property type="protein sequence ID" value="AAF37192.1"/>
    <property type="molecule type" value="mRNA"/>
</dbReference>
<dbReference type="EMBL" id="AC003028">
    <property type="protein sequence ID" value="AAM14857.1"/>
    <property type="molecule type" value="Genomic_DNA"/>
</dbReference>
<dbReference type="EMBL" id="CP002685">
    <property type="protein sequence ID" value="AEC09518.1"/>
    <property type="molecule type" value="Genomic_DNA"/>
</dbReference>
<dbReference type="EMBL" id="CP002685">
    <property type="protein sequence ID" value="AEC09519.1"/>
    <property type="molecule type" value="Genomic_DNA"/>
</dbReference>
<dbReference type="EMBL" id="BT025321">
    <property type="protein sequence ID" value="ABF57277.1"/>
    <property type="molecule type" value="mRNA"/>
</dbReference>
<dbReference type="EMBL" id="AK226212">
    <property type="protein sequence ID" value="BAE98377.1"/>
    <property type="molecule type" value="mRNA"/>
</dbReference>
<dbReference type="EMBL" id="BX819203">
    <property type="status" value="NOT_ANNOTATED_CDS"/>
    <property type="molecule type" value="mRNA"/>
</dbReference>
<dbReference type="PIR" id="T01260">
    <property type="entry name" value="T01260"/>
</dbReference>
<dbReference type="RefSeq" id="NP_181363.1">
    <molecule id="Q9M6N7-1"/>
    <property type="nucleotide sequence ID" value="NM_129385.5"/>
</dbReference>
<dbReference type="RefSeq" id="NP_973634.1">
    <molecule id="Q9M6N7-2"/>
    <property type="nucleotide sequence ID" value="NM_201905.1"/>
</dbReference>
<dbReference type="SMR" id="Q9M6N7"/>
<dbReference type="BioGRID" id="3751">
    <property type="interactions" value="4"/>
</dbReference>
<dbReference type="FunCoup" id="Q9M6N7">
    <property type="interactions" value="425"/>
</dbReference>
<dbReference type="IntAct" id="Q9M6N7">
    <property type="interactions" value="4"/>
</dbReference>
<dbReference type="STRING" id="3702.Q9M6N7"/>
<dbReference type="TCDB" id="1.A.11.2.2">
    <property type="family name" value="the ammonium transporter channel (amt) family"/>
</dbReference>
<dbReference type="PaxDb" id="3702-AT2G38290.1"/>
<dbReference type="ProteomicsDB" id="245053">
    <molecule id="Q9M6N7-1"/>
</dbReference>
<dbReference type="EnsemblPlants" id="AT2G38290.1">
    <molecule id="Q9M6N7-1"/>
    <property type="protein sequence ID" value="AT2G38290.1"/>
    <property type="gene ID" value="AT2G38290"/>
</dbReference>
<dbReference type="EnsemblPlants" id="AT2G38290.2">
    <molecule id="Q9M6N7-2"/>
    <property type="protein sequence ID" value="AT2G38290.2"/>
    <property type="gene ID" value="AT2G38290"/>
</dbReference>
<dbReference type="GeneID" id="818409"/>
<dbReference type="Gramene" id="AT2G38290.1">
    <molecule id="Q9M6N7-1"/>
    <property type="protein sequence ID" value="AT2G38290.1"/>
    <property type="gene ID" value="AT2G38290"/>
</dbReference>
<dbReference type="Gramene" id="AT2G38290.2">
    <molecule id="Q9M6N7-2"/>
    <property type="protein sequence ID" value="AT2G38290.2"/>
    <property type="gene ID" value="AT2G38290"/>
</dbReference>
<dbReference type="KEGG" id="ath:AT2G38290"/>
<dbReference type="Araport" id="AT2G38290"/>
<dbReference type="TAIR" id="AT2G38290">
    <property type="gene designation" value="AMT2"/>
</dbReference>
<dbReference type="eggNOG" id="KOG0682">
    <property type="taxonomic scope" value="Eukaryota"/>
</dbReference>
<dbReference type="InParanoid" id="Q9M6N7"/>
<dbReference type="OMA" id="IRIFMPL"/>
<dbReference type="PhylomeDB" id="Q9M6N7"/>
<dbReference type="SABIO-RK" id="Q9M6N7"/>
<dbReference type="PRO" id="PR:Q9M6N7"/>
<dbReference type="Proteomes" id="UP000006548">
    <property type="component" value="Chromosome 2"/>
</dbReference>
<dbReference type="ExpressionAtlas" id="Q9M6N7">
    <property type="expression patterns" value="baseline and differential"/>
</dbReference>
<dbReference type="GO" id="GO:0005886">
    <property type="term" value="C:plasma membrane"/>
    <property type="evidence" value="ECO:0000314"/>
    <property type="project" value="TAIR"/>
</dbReference>
<dbReference type="GO" id="GO:0009506">
    <property type="term" value="C:plasmodesma"/>
    <property type="evidence" value="ECO:0007005"/>
    <property type="project" value="TAIR"/>
</dbReference>
<dbReference type="GO" id="GO:0008519">
    <property type="term" value="F:ammonium channel activity"/>
    <property type="evidence" value="ECO:0007669"/>
    <property type="project" value="InterPro"/>
</dbReference>
<dbReference type="GO" id="GO:0009624">
    <property type="term" value="P:response to nematode"/>
    <property type="evidence" value="ECO:0007007"/>
    <property type="project" value="TAIR"/>
</dbReference>
<dbReference type="FunFam" id="1.10.3430.10:FF:000005">
    <property type="entry name" value="Ammonium transporter"/>
    <property type="match status" value="1"/>
</dbReference>
<dbReference type="Gene3D" id="1.10.3430.10">
    <property type="entry name" value="Ammonium transporter AmtB like domains"/>
    <property type="match status" value="1"/>
</dbReference>
<dbReference type="InterPro" id="IPR029020">
    <property type="entry name" value="Ammonium/urea_transptr"/>
</dbReference>
<dbReference type="InterPro" id="IPR001905">
    <property type="entry name" value="Ammonium_transpt"/>
</dbReference>
<dbReference type="InterPro" id="IPR018047">
    <property type="entry name" value="Ammonium_transpt_CS"/>
</dbReference>
<dbReference type="InterPro" id="IPR024041">
    <property type="entry name" value="NH4_transpt_AmtB-like_dom"/>
</dbReference>
<dbReference type="InterPro" id="IPR002229">
    <property type="entry name" value="RhesusRHD"/>
</dbReference>
<dbReference type="NCBIfam" id="TIGR00836">
    <property type="entry name" value="amt"/>
    <property type="match status" value="1"/>
</dbReference>
<dbReference type="PANTHER" id="PTHR43029:SF38">
    <property type="entry name" value="AMMONIUM TRANSPORTER 2"/>
    <property type="match status" value="1"/>
</dbReference>
<dbReference type="PANTHER" id="PTHR43029">
    <property type="entry name" value="AMMONIUM TRANSPORTER MEP2"/>
    <property type="match status" value="1"/>
</dbReference>
<dbReference type="Pfam" id="PF00909">
    <property type="entry name" value="Ammonium_transp"/>
    <property type="match status" value="1"/>
</dbReference>
<dbReference type="PRINTS" id="PR00342">
    <property type="entry name" value="RHESUSRHD"/>
</dbReference>
<dbReference type="SUPFAM" id="SSF111352">
    <property type="entry name" value="Ammonium transporter"/>
    <property type="match status" value="1"/>
</dbReference>
<dbReference type="PROSITE" id="PS01219">
    <property type="entry name" value="AMMONIUM_TRANSP"/>
    <property type="match status" value="1"/>
</dbReference>
<protein>
    <recommendedName>
        <fullName>Ammonium transporter 2</fullName>
        <shortName>AtAMT2</shortName>
    </recommendedName>
</protein>
<gene>
    <name type="primary">AMT2</name>
    <name type="ordered locus">At2g38290</name>
    <name type="ORF">F16M14.22</name>
</gene>
<feature type="chain" id="PRO_0000139747" description="Ammonium transporter 2">
    <location>
        <begin position="1"/>
        <end position="475"/>
    </location>
</feature>
<feature type="transmembrane region" description="Helical" evidence="1">
    <location>
        <begin position="27"/>
        <end position="47"/>
    </location>
</feature>
<feature type="transmembrane region" description="Helical" evidence="1">
    <location>
        <begin position="55"/>
        <end position="75"/>
    </location>
</feature>
<feature type="transmembrane region" description="Helical" evidence="1">
    <location>
        <begin position="120"/>
        <end position="140"/>
    </location>
</feature>
<feature type="transmembrane region" description="Helical" evidence="1">
    <location>
        <begin position="148"/>
        <end position="168"/>
    </location>
</feature>
<feature type="transmembrane region" description="Helical" evidence="1">
    <location>
        <begin position="183"/>
        <end position="203"/>
    </location>
</feature>
<feature type="transmembrane region" description="Helical" evidence="1">
    <location>
        <begin position="218"/>
        <end position="238"/>
    </location>
</feature>
<feature type="transmembrane region" description="Helical" evidence="1">
    <location>
        <begin position="254"/>
        <end position="274"/>
    </location>
</feature>
<feature type="transmembrane region" description="Helical" evidence="1">
    <location>
        <begin position="279"/>
        <end position="299"/>
    </location>
</feature>
<feature type="transmembrane region" description="Helical" evidence="1">
    <location>
        <begin position="302"/>
        <end position="322"/>
    </location>
</feature>
<feature type="transmembrane region" description="Helical" evidence="1">
    <location>
        <begin position="336"/>
        <end position="356"/>
    </location>
</feature>
<feature type="transmembrane region" description="Helical" evidence="1">
    <location>
        <begin position="389"/>
        <end position="409"/>
    </location>
</feature>
<feature type="splice variant" id="VSP_038202" description="In isoform 2." evidence="3">
    <location>
        <begin position="1"/>
        <end position="116"/>
    </location>
</feature>
<feature type="sequence variant" description="In strain: cv. C24.">
    <original>D</original>
    <variation>N</variation>
    <location>
        <position position="95"/>
    </location>
</feature>
<feature type="sequence conflict" description="In Ref. 6; BX819203." evidence="4" ref="6">
    <original>P</original>
    <variation>L</variation>
    <location>
        <position position="369"/>
    </location>
</feature>
<keyword id="KW-0025">Alternative splicing</keyword>
<keyword id="KW-0924">Ammonia transport</keyword>
<keyword id="KW-1003">Cell membrane</keyword>
<keyword id="KW-0472">Membrane</keyword>
<keyword id="KW-1185">Reference proteome</keyword>
<keyword id="KW-0812">Transmembrane</keyword>
<keyword id="KW-1133">Transmembrane helix</keyword>
<keyword id="KW-0813">Transport</keyword>
<name>AMT2_ARATH</name>
<sequence>MAGAYDPSLPEVPEWLNKGDNAWQLTAATLVGLQSMPGLVILYASIVKKKWAVNSAFMALYAFAAVLLCWVLLCYKMAFGEELLPFWGKGGPAFDQGYLKGQAKIPNSNVAAPYFPMATLVYFQFTFAAITTILVAGSVLGRMNIKAWMAFVPLWLIFSYTVGAYSIWGGGFLYQWGVIDYSGGYVIHLSSGVAGFVAAYWVGPRPKADRERFPPNNVLLMLAGAGLLWMGWSGFNGGAPYAANLTSSIAVLNTNLSAATSLLVWTTLDVIFFGKPSVIGAIQGMVTGLAGVTPGAGLIQTWAAIIIGVVSGTAPWASMMIIHKKSALLQKVDDTLAVFYTHAVAGLLGGIMTGLFAHPDLCVLVLPLPATRGAFYGGNGGKQLLKQLAGAAFIAVWNVVSTTIILLAIRVFIPLRMAEEELGIGDDAAHGEEAYALWGDGEKFDATRHVQQFERDQEAAHPSYVHGARGVTIVL</sequence>
<comment type="function">
    <text evidence="2">High affinity ammonium transporter that may play an important role in moving ammonium between the apoplast and symplast of cells throughout the plant. Does not transport methylammonium.</text>
</comment>
<comment type="biophysicochemical properties">
    <kinetics>
        <KM evidence="2">21 uM for ammonium chloride (at external pH 6.1)</KM>
        <text>Measured in yeast knockout mutant YCW012.</text>
    </kinetics>
</comment>
<comment type="subcellular location">
    <subcellularLocation>
        <location evidence="2">Cell membrane</location>
        <topology evidence="2">Multi-pass membrane protein</topology>
    </subcellularLocation>
</comment>
<comment type="alternative products">
    <event type="alternative splicing"/>
    <isoform>
        <id>Q9M6N7-1</id>
        <name>1</name>
        <sequence type="displayed"/>
    </isoform>
    <isoform>
        <id>Q9M6N7-2</id>
        <name>2</name>
        <sequence type="described" ref="VSP_038202"/>
    </isoform>
</comment>
<comment type="tissue specificity">
    <text evidence="2">Higher expression in shoots than roots.</text>
</comment>
<comment type="induction">
    <text evidence="2">By nitrogen deprivation in roots.</text>
</comment>
<comment type="similarity">
    <text evidence="4">Belongs to the ammonia transporter channel (TC 1.A.11.2) family.</text>
</comment>
<proteinExistence type="evidence at protein level"/>